<organism>
    <name type="scientific">Campylobacter curvus (strain 525.92)</name>
    <dbReference type="NCBI Taxonomy" id="360105"/>
    <lineage>
        <taxon>Bacteria</taxon>
        <taxon>Pseudomonadati</taxon>
        <taxon>Campylobacterota</taxon>
        <taxon>Epsilonproteobacteria</taxon>
        <taxon>Campylobacterales</taxon>
        <taxon>Campylobacteraceae</taxon>
        <taxon>Campylobacter</taxon>
    </lineage>
</organism>
<evidence type="ECO:0000255" key="1">
    <source>
        <dbReference type="HAMAP-Rule" id="MF_00016"/>
    </source>
</evidence>
<proteinExistence type="inferred from homology"/>
<accession>A7GZP9</accession>
<dbReference type="EC" id="3.6.4.-" evidence="1"/>
<dbReference type="EMBL" id="CP000767">
    <property type="protein sequence ID" value="EAT99750.1"/>
    <property type="molecule type" value="Genomic_DNA"/>
</dbReference>
<dbReference type="RefSeq" id="WP_009650569.1">
    <property type="nucleotide sequence ID" value="NC_009715.2"/>
</dbReference>
<dbReference type="SMR" id="A7GZP9"/>
<dbReference type="STRING" id="360105.CCV52592_1922"/>
<dbReference type="GeneID" id="61002704"/>
<dbReference type="KEGG" id="ccv:CCV52592_1922"/>
<dbReference type="HOGENOM" id="CLU_055599_1_0_7"/>
<dbReference type="OrthoDB" id="9804478at2"/>
<dbReference type="Proteomes" id="UP000006380">
    <property type="component" value="Chromosome"/>
</dbReference>
<dbReference type="GO" id="GO:0005737">
    <property type="term" value="C:cytoplasm"/>
    <property type="evidence" value="ECO:0007669"/>
    <property type="project" value="UniProtKB-SubCell"/>
</dbReference>
<dbReference type="GO" id="GO:0048476">
    <property type="term" value="C:Holliday junction resolvase complex"/>
    <property type="evidence" value="ECO:0007669"/>
    <property type="project" value="UniProtKB-UniRule"/>
</dbReference>
<dbReference type="GO" id="GO:0005524">
    <property type="term" value="F:ATP binding"/>
    <property type="evidence" value="ECO:0007669"/>
    <property type="project" value="UniProtKB-UniRule"/>
</dbReference>
<dbReference type="GO" id="GO:0016887">
    <property type="term" value="F:ATP hydrolysis activity"/>
    <property type="evidence" value="ECO:0007669"/>
    <property type="project" value="InterPro"/>
</dbReference>
<dbReference type="GO" id="GO:0000400">
    <property type="term" value="F:four-way junction DNA binding"/>
    <property type="evidence" value="ECO:0007669"/>
    <property type="project" value="UniProtKB-UniRule"/>
</dbReference>
<dbReference type="GO" id="GO:0009378">
    <property type="term" value="F:four-way junction helicase activity"/>
    <property type="evidence" value="ECO:0007669"/>
    <property type="project" value="InterPro"/>
</dbReference>
<dbReference type="GO" id="GO:0006310">
    <property type="term" value="P:DNA recombination"/>
    <property type="evidence" value="ECO:0007669"/>
    <property type="project" value="UniProtKB-UniRule"/>
</dbReference>
<dbReference type="GO" id="GO:0006281">
    <property type="term" value="P:DNA repair"/>
    <property type="evidence" value="ECO:0007669"/>
    <property type="project" value="UniProtKB-UniRule"/>
</dbReference>
<dbReference type="CDD" id="cd00009">
    <property type="entry name" value="AAA"/>
    <property type="match status" value="1"/>
</dbReference>
<dbReference type="Gene3D" id="1.10.8.60">
    <property type="match status" value="1"/>
</dbReference>
<dbReference type="Gene3D" id="3.40.50.300">
    <property type="entry name" value="P-loop containing nucleotide triphosphate hydrolases"/>
    <property type="match status" value="1"/>
</dbReference>
<dbReference type="Gene3D" id="1.10.10.10">
    <property type="entry name" value="Winged helix-like DNA-binding domain superfamily/Winged helix DNA-binding domain"/>
    <property type="match status" value="1"/>
</dbReference>
<dbReference type="HAMAP" id="MF_00016">
    <property type="entry name" value="DNA_HJ_migration_RuvB"/>
    <property type="match status" value="1"/>
</dbReference>
<dbReference type="InterPro" id="IPR003593">
    <property type="entry name" value="AAA+_ATPase"/>
</dbReference>
<dbReference type="InterPro" id="IPR041445">
    <property type="entry name" value="AAA_lid_4"/>
</dbReference>
<dbReference type="InterPro" id="IPR004605">
    <property type="entry name" value="DNA_helicase_Holl-junc_RuvB"/>
</dbReference>
<dbReference type="InterPro" id="IPR027417">
    <property type="entry name" value="P-loop_NTPase"/>
</dbReference>
<dbReference type="InterPro" id="IPR008824">
    <property type="entry name" value="RuvB-like_N"/>
</dbReference>
<dbReference type="InterPro" id="IPR008823">
    <property type="entry name" value="RuvB_C"/>
</dbReference>
<dbReference type="InterPro" id="IPR036388">
    <property type="entry name" value="WH-like_DNA-bd_sf"/>
</dbReference>
<dbReference type="InterPro" id="IPR036390">
    <property type="entry name" value="WH_DNA-bd_sf"/>
</dbReference>
<dbReference type="NCBIfam" id="NF000868">
    <property type="entry name" value="PRK00080.1"/>
    <property type="match status" value="1"/>
</dbReference>
<dbReference type="NCBIfam" id="TIGR00635">
    <property type="entry name" value="ruvB"/>
    <property type="match status" value="1"/>
</dbReference>
<dbReference type="PANTHER" id="PTHR42848">
    <property type="match status" value="1"/>
</dbReference>
<dbReference type="PANTHER" id="PTHR42848:SF1">
    <property type="entry name" value="HOLLIDAY JUNCTION BRANCH MIGRATION COMPLEX SUBUNIT RUVB"/>
    <property type="match status" value="1"/>
</dbReference>
<dbReference type="Pfam" id="PF17864">
    <property type="entry name" value="AAA_lid_4"/>
    <property type="match status" value="1"/>
</dbReference>
<dbReference type="Pfam" id="PF05491">
    <property type="entry name" value="RuvB_C"/>
    <property type="match status" value="1"/>
</dbReference>
<dbReference type="Pfam" id="PF05496">
    <property type="entry name" value="RuvB_N"/>
    <property type="match status" value="1"/>
</dbReference>
<dbReference type="SMART" id="SM00382">
    <property type="entry name" value="AAA"/>
    <property type="match status" value="1"/>
</dbReference>
<dbReference type="SUPFAM" id="SSF52540">
    <property type="entry name" value="P-loop containing nucleoside triphosphate hydrolases"/>
    <property type="match status" value="1"/>
</dbReference>
<dbReference type="SUPFAM" id="SSF46785">
    <property type="entry name" value="Winged helix' DNA-binding domain"/>
    <property type="match status" value="1"/>
</dbReference>
<name>RUVB_CAMC5</name>
<sequence length="338" mass="37539">MDRIVEIEKVSFESEFEVSLRPSSFDDYIGQEKIKQNLDVFIKAAKKRGECLDHVLFYGPPGLGKTTLAHIIANEMAVSIKMTAAPMIEKSGDLAAILTNLQEGDVLFIDEIHRLSPAIEEVLYPAMEDFRLDIIIGSGPAAQTIKIDLPKFTLIGATTRAGMISAPLRDRFGMDFRLQFYSTAELSRIIQIASVKLGKECDKAAALEIAKRARATPRIALRLLKRIRDFAEVNDEAMISHERAKEGLNALGVNSLGFDEMDIKYLEILLDAKRRPLGLSTIAAALSEDEGTVEDVIEPYLLANGFIERTAKGRIASEKCFETFKIKLNRTKGLFDGE</sequence>
<protein>
    <recommendedName>
        <fullName evidence="1">Holliday junction branch migration complex subunit RuvB</fullName>
        <ecNumber evidence="1">3.6.4.-</ecNumber>
    </recommendedName>
</protein>
<gene>
    <name evidence="1" type="primary">ruvB</name>
    <name type="ordered locus">Ccur92_13870</name>
    <name type="ORF">CCV52592_1922</name>
</gene>
<feature type="chain" id="PRO_1000001380" description="Holliday junction branch migration complex subunit RuvB">
    <location>
        <begin position="1"/>
        <end position="338"/>
    </location>
</feature>
<feature type="region of interest" description="Large ATPase domain (RuvB-L)" evidence="1">
    <location>
        <begin position="1"/>
        <end position="181"/>
    </location>
</feature>
<feature type="region of interest" description="Small ATPAse domain (RuvB-S)" evidence="1">
    <location>
        <begin position="182"/>
        <end position="252"/>
    </location>
</feature>
<feature type="region of interest" description="Head domain (RuvB-H)" evidence="1">
    <location>
        <begin position="255"/>
        <end position="338"/>
    </location>
</feature>
<feature type="binding site" evidence="1">
    <location>
        <position position="20"/>
    </location>
    <ligand>
        <name>ATP</name>
        <dbReference type="ChEBI" id="CHEBI:30616"/>
    </ligand>
</feature>
<feature type="binding site" evidence="1">
    <location>
        <position position="21"/>
    </location>
    <ligand>
        <name>ATP</name>
        <dbReference type="ChEBI" id="CHEBI:30616"/>
    </ligand>
</feature>
<feature type="binding site" evidence="1">
    <location>
        <position position="62"/>
    </location>
    <ligand>
        <name>ATP</name>
        <dbReference type="ChEBI" id="CHEBI:30616"/>
    </ligand>
</feature>
<feature type="binding site" evidence="1">
    <location>
        <position position="65"/>
    </location>
    <ligand>
        <name>ATP</name>
        <dbReference type="ChEBI" id="CHEBI:30616"/>
    </ligand>
</feature>
<feature type="binding site" evidence="1">
    <location>
        <position position="66"/>
    </location>
    <ligand>
        <name>ATP</name>
        <dbReference type="ChEBI" id="CHEBI:30616"/>
    </ligand>
</feature>
<feature type="binding site" evidence="1">
    <location>
        <position position="66"/>
    </location>
    <ligand>
        <name>Mg(2+)</name>
        <dbReference type="ChEBI" id="CHEBI:18420"/>
    </ligand>
</feature>
<feature type="binding site" evidence="1">
    <location>
        <position position="67"/>
    </location>
    <ligand>
        <name>ATP</name>
        <dbReference type="ChEBI" id="CHEBI:30616"/>
    </ligand>
</feature>
<feature type="binding site" evidence="1">
    <location>
        <begin position="128"/>
        <end position="130"/>
    </location>
    <ligand>
        <name>ATP</name>
        <dbReference type="ChEBI" id="CHEBI:30616"/>
    </ligand>
</feature>
<feature type="binding site" evidence="1">
    <location>
        <position position="171"/>
    </location>
    <ligand>
        <name>ATP</name>
        <dbReference type="ChEBI" id="CHEBI:30616"/>
    </ligand>
</feature>
<feature type="binding site" evidence="1">
    <location>
        <position position="181"/>
    </location>
    <ligand>
        <name>ATP</name>
        <dbReference type="ChEBI" id="CHEBI:30616"/>
    </ligand>
</feature>
<feature type="binding site" evidence="1">
    <location>
        <position position="218"/>
    </location>
    <ligand>
        <name>ATP</name>
        <dbReference type="ChEBI" id="CHEBI:30616"/>
    </ligand>
</feature>
<feature type="binding site" evidence="1">
    <location>
        <position position="309"/>
    </location>
    <ligand>
        <name>DNA</name>
        <dbReference type="ChEBI" id="CHEBI:16991"/>
    </ligand>
</feature>
<feature type="binding site" evidence="1">
    <location>
        <position position="314"/>
    </location>
    <ligand>
        <name>DNA</name>
        <dbReference type="ChEBI" id="CHEBI:16991"/>
    </ligand>
</feature>
<comment type="function">
    <text evidence="1">The RuvA-RuvB-RuvC complex processes Holliday junction (HJ) DNA during genetic recombination and DNA repair, while the RuvA-RuvB complex plays an important role in the rescue of blocked DNA replication forks via replication fork reversal (RFR). RuvA specifically binds to HJ cruciform DNA, conferring on it an open structure. The RuvB hexamer acts as an ATP-dependent pump, pulling dsDNA into and through the RuvAB complex. RuvB forms 2 homohexamers on either side of HJ DNA bound by 1 or 2 RuvA tetramers; 4 subunits per hexamer contact DNA at a time. Coordinated motions by a converter formed by DNA-disengaged RuvB subunits stimulates ATP hydrolysis and nucleotide exchange. Immobilization of the converter enables RuvB to convert the ATP-contained energy into a lever motion, pulling 2 nucleotides of DNA out of the RuvA tetramer per ATP hydrolyzed, thus driving DNA branch migration. The RuvB motors rotate together with the DNA substrate, which together with the progressing nucleotide cycle form the mechanistic basis for DNA recombination by continuous HJ branch migration. Branch migration allows RuvC to scan DNA until it finds its consensus sequence, where it cleaves and resolves cruciform DNA.</text>
</comment>
<comment type="catalytic activity">
    <reaction evidence="1">
        <text>ATP + H2O = ADP + phosphate + H(+)</text>
        <dbReference type="Rhea" id="RHEA:13065"/>
        <dbReference type="ChEBI" id="CHEBI:15377"/>
        <dbReference type="ChEBI" id="CHEBI:15378"/>
        <dbReference type="ChEBI" id="CHEBI:30616"/>
        <dbReference type="ChEBI" id="CHEBI:43474"/>
        <dbReference type="ChEBI" id="CHEBI:456216"/>
    </reaction>
</comment>
<comment type="subunit">
    <text evidence="1">Homohexamer. Forms an RuvA(8)-RuvB(12)-Holliday junction (HJ) complex. HJ DNA is sandwiched between 2 RuvA tetramers; dsDNA enters through RuvA and exits via RuvB. An RuvB hexamer assembles on each DNA strand where it exits the tetramer. Each RuvB hexamer is contacted by two RuvA subunits (via domain III) on 2 adjacent RuvB subunits; this complex drives branch migration. In the full resolvosome a probable DNA-RuvA(4)-RuvB(12)-RuvC(2) complex forms which resolves the HJ.</text>
</comment>
<comment type="subcellular location">
    <subcellularLocation>
        <location evidence="1">Cytoplasm</location>
    </subcellularLocation>
</comment>
<comment type="domain">
    <text evidence="1">Has 3 domains, the large (RuvB-L) and small ATPase (RuvB-S) domains and the C-terminal head (RuvB-H) domain. The head domain binds DNA, while the ATPase domains jointly bind ATP, ADP or are empty depending on the state of the subunit in the translocation cycle. During a single DNA translocation step the structure of each domain remains the same, but their relative positions change.</text>
</comment>
<comment type="similarity">
    <text evidence="1">Belongs to the RuvB family.</text>
</comment>
<reference key="1">
    <citation type="submission" date="2007-07" db="EMBL/GenBank/DDBJ databases">
        <title>Genome sequence of Campylobacter curvus 525.92 isolated from human feces.</title>
        <authorList>
            <person name="Fouts D.E."/>
            <person name="Mongodin E.F."/>
            <person name="Puiu D."/>
            <person name="Sebastian Y."/>
            <person name="Miller W.G."/>
            <person name="Mandrell R.E."/>
            <person name="Lastovica A.J."/>
            <person name="Nelson K.E."/>
        </authorList>
    </citation>
    <scope>NUCLEOTIDE SEQUENCE [LARGE SCALE GENOMIC DNA]</scope>
    <source>
        <strain>525.92</strain>
    </source>
</reference>
<keyword id="KW-0067">ATP-binding</keyword>
<keyword id="KW-0963">Cytoplasm</keyword>
<keyword id="KW-0227">DNA damage</keyword>
<keyword id="KW-0233">DNA recombination</keyword>
<keyword id="KW-0234">DNA repair</keyword>
<keyword id="KW-0238">DNA-binding</keyword>
<keyword id="KW-0378">Hydrolase</keyword>
<keyword id="KW-0547">Nucleotide-binding</keyword>
<keyword id="KW-1185">Reference proteome</keyword>